<organism>
    <name type="scientific">Pseudomonas putida (strain ATCC 700007 / DSM 6899 / JCM 31910 / BCRC 17059 / LMG 24140 / F1)</name>
    <dbReference type="NCBI Taxonomy" id="351746"/>
    <lineage>
        <taxon>Bacteria</taxon>
        <taxon>Pseudomonadati</taxon>
        <taxon>Pseudomonadota</taxon>
        <taxon>Gammaproteobacteria</taxon>
        <taxon>Pseudomonadales</taxon>
        <taxon>Pseudomonadaceae</taxon>
        <taxon>Pseudomonas</taxon>
    </lineage>
</organism>
<dbReference type="EC" id="6.3.4.5" evidence="1"/>
<dbReference type="EMBL" id="CP000712">
    <property type="protein sequence ID" value="ABQ77290.1"/>
    <property type="molecule type" value="Genomic_DNA"/>
</dbReference>
<dbReference type="SMR" id="A5VZI0"/>
<dbReference type="KEGG" id="ppf:Pput_1129"/>
<dbReference type="eggNOG" id="COG0137">
    <property type="taxonomic scope" value="Bacteria"/>
</dbReference>
<dbReference type="HOGENOM" id="CLU_032784_4_2_6"/>
<dbReference type="UniPathway" id="UPA00068">
    <property type="reaction ID" value="UER00113"/>
</dbReference>
<dbReference type="GO" id="GO:0005737">
    <property type="term" value="C:cytoplasm"/>
    <property type="evidence" value="ECO:0007669"/>
    <property type="project" value="UniProtKB-SubCell"/>
</dbReference>
<dbReference type="GO" id="GO:0004055">
    <property type="term" value="F:argininosuccinate synthase activity"/>
    <property type="evidence" value="ECO:0007669"/>
    <property type="project" value="UniProtKB-UniRule"/>
</dbReference>
<dbReference type="GO" id="GO:0005524">
    <property type="term" value="F:ATP binding"/>
    <property type="evidence" value="ECO:0007669"/>
    <property type="project" value="UniProtKB-UniRule"/>
</dbReference>
<dbReference type="GO" id="GO:0000053">
    <property type="term" value="P:argininosuccinate metabolic process"/>
    <property type="evidence" value="ECO:0007669"/>
    <property type="project" value="TreeGrafter"/>
</dbReference>
<dbReference type="GO" id="GO:0006526">
    <property type="term" value="P:L-arginine biosynthetic process"/>
    <property type="evidence" value="ECO:0007669"/>
    <property type="project" value="UniProtKB-UniRule"/>
</dbReference>
<dbReference type="GO" id="GO:0000050">
    <property type="term" value="P:urea cycle"/>
    <property type="evidence" value="ECO:0007669"/>
    <property type="project" value="TreeGrafter"/>
</dbReference>
<dbReference type="CDD" id="cd01999">
    <property type="entry name" value="ASS"/>
    <property type="match status" value="1"/>
</dbReference>
<dbReference type="FunFam" id="1.20.5.470:FF:000001">
    <property type="entry name" value="Argininosuccinate synthase"/>
    <property type="match status" value="1"/>
</dbReference>
<dbReference type="FunFam" id="3.40.50.620:FF:000019">
    <property type="entry name" value="Argininosuccinate synthase"/>
    <property type="match status" value="1"/>
</dbReference>
<dbReference type="FunFam" id="3.90.1260.10:FF:000001">
    <property type="entry name" value="Argininosuccinate synthase"/>
    <property type="match status" value="1"/>
</dbReference>
<dbReference type="Gene3D" id="3.90.1260.10">
    <property type="entry name" value="Argininosuccinate synthetase, chain A, domain 2"/>
    <property type="match status" value="1"/>
</dbReference>
<dbReference type="Gene3D" id="3.40.50.620">
    <property type="entry name" value="HUPs"/>
    <property type="match status" value="1"/>
</dbReference>
<dbReference type="Gene3D" id="1.20.5.470">
    <property type="entry name" value="Single helix bin"/>
    <property type="match status" value="1"/>
</dbReference>
<dbReference type="HAMAP" id="MF_00005">
    <property type="entry name" value="Arg_succ_synth_type1"/>
    <property type="match status" value="1"/>
</dbReference>
<dbReference type="InterPro" id="IPR048268">
    <property type="entry name" value="Arginosuc_syn_C"/>
</dbReference>
<dbReference type="InterPro" id="IPR048267">
    <property type="entry name" value="Arginosuc_syn_N"/>
</dbReference>
<dbReference type="InterPro" id="IPR001518">
    <property type="entry name" value="Arginosuc_synth"/>
</dbReference>
<dbReference type="InterPro" id="IPR018223">
    <property type="entry name" value="Arginosuc_synth_CS"/>
</dbReference>
<dbReference type="InterPro" id="IPR023434">
    <property type="entry name" value="Arginosuc_synth_type_1_subfam"/>
</dbReference>
<dbReference type="InterPro" id="IPR024074">
    <property type="entry name" value="AS_cat/multimer_dom_body"/>
</dbReference>
<dbReference type="InterPro" id="IPR014729">
    <property type="entry name" value="Rossmann-like_a/b/a_fold"/>
</dbReference>
<dbReference type="NCBIfam" id="TIGR00032">
    <property type="entry name" value="argG"/>
    <property type="match status" value="1"/>
</dbReference>
<dbReference type="NCBIfam" id="NF001770">
    <property type="entry name" value="PRK00509.1"/>
    <property type="match status" value="1"/>
</dbReference>
<dbReference type="PANTHER" id="PTHR11587">
    <property type="entry name" value="ARGININOSUCCINATE SYNTHASE"/>
    <property type="match status" value="1"/>
</dbReference>
<dbReference type="PANTHER" id="PTHR11587:SF2">
    <property type="entry name" value="ARGININOSUCCINATE SYNTHASE"/>
    <property type="match status" value="1"/>
</dbReference>
<dbReference type="Pfam" id="PF20979">
    <property type="entry name" value="Arginosuc_syn_C"/>
    <property type="match status" value="1"/>
</dbReference>
<dbReference type="Pfam" id="PF00764">
    <property type="entry name" value="Arginosuc_synth"/>
    <property type="match status" value="1"/>
</dbReference>
<dbReference type="SUPFAM" id="SSF52402">
    <property type="entry name" value="Adenine nucleotide alpha hydrolases-like"/>
    <property type="match status" value="1"/>
</dbReference>
<dbReference type="SUPFAM" id="SSF69864">
    <property type="entry name" value="Argininosuccinate synthetase, C-terminal domain"/>
    <property type="match status" value="1"/>
</dbReference>
<dbReference type="PROSITE" id="PS00564">
    <property type="entry name" value="ARGININOSUCCIN_SYN_1"/>
    <property type="match status" value="1"/>
</dbReference>
<dbReference type="PROSITE" id="PS00565">
    <property type="entry name" value="ARGININOSUCCIN_SYN_2"/>
    <property type="match status" value="1"/>
</dbReference>
<evidence type="ECO:0000255" key="1">
    <source>
        <dbReference type="HAMAP-Rule" id="MF_00005"/>
    </source>
</evidence>
<gene>
    <name evidence="1" type="primary">argG</name>
    <name type="ordered locus">Pput_1129</name>
</gene>
<proteinExistence type="inferred from homology"/>
<protein>
    <recommendedName>
        <fullName evidence="1">Argininosuccinate synthase</fullName>
        <ecNumber evidence="1">6.3.4.5</ecNumber>
    </recommendedName>
    <alternativeName>
        <fullName evidence="1">Citrulline--aspartate ligase</fullName>
    </alternativeName>
</protein>
<feature type="chain" id="PRO_1000000426" description="Argininosuccinate synthase">
    <location>
        <begin position="1"/>
        <end position="405"/>
    </location>
</feature>
<feature type="binding site" evidence="1">
    <location>
        <begin position="10"/>
        <end position="18"/>
    </location>
    <ligand>
        <name>ATP</name>
        <dbReference type="ChEBI" id="CHEBI:30616"/>
    </ligand>
</feature>
<feature type="binding site" evidence="1">
    <location>
        <position position="37"/>
    </location>
    <ligand>
        <name>ATP</name>
        <dbReference type="ChEBI" id="CHEBI:30616"/>
    </ligand>
</feature>
<feature type="binding site" evidence="1">
    <location>
        <position position="88"/>
    </location>
    <ligand>
        <name>L-citrulline</name>
        <dbReference type="ChEBI" id="CHEBI:57743"/>
    </ligand>
</feature>
<feature type="binding site" evidence="1">
    <location>
        <position position="93"/>
    </location>
    <ligand>
        <name>L-citrulline</name>
        <dbReference type="ChEBI" id="CHEBI:57743"/>
    </ligand>
</feature>
<feature type="binding site" evidence="1">
    <location>
        <position position="118"/>
    </location>
    <ligand>
        <name>ATP</name>
        <dbReference type="ChEBI" id="CHEBI:30616"/>
    </ligand>
</feature>
<feature type="binding site" evidence="1">
    <location>
        <position position="120"/>
    </location>
    <ligand>
        <name>L-aspartate</name>
        <dbReference type="ChEBI" id="CHEBI:29991"/>
    </ligand>
</feature>
<feature type="binding site" evidence="1">
    <location>
        <position position="124"/>
    </location>
    <ligand>
        <name>L-aspartate</name>
        <dbReference type="ChEBI" id="CHEBI:29991"/>
    </ligand>
</feature>
<feature type="binding site" evidence="1">
    <location>
        <position position="124"/>
    </location>
    <ligand>
        <name>L-citrulline</name>
        <dbReference type="ChEBI" id="CHEBI:57743"/>
    </ligand>
</feature>
<feature type="binding site" evidence="1">
    <location>
        <position position="125"/>
    </location>
    <ligand>
        <name>L-aspartate</name>
        <dbReference type="ChEBI" id="CHEBI:29991"/>
    </ligand>
</feature>
<feature type="binding site" evidence="1">
    <location>
        <position position="128"/>
    </location>
    <ligand>
        <name>L-citrulline</name>
        <dbReference type="ChEBI" id="CHEBI:57743"/>
    </ligand>
</feature>
<feature type="binding site" evidence="1">
    <location>
        <position position="179"/>
    </location>
    <ligand>
        <name>L-citrulline</name>
        <dbReference type="ChEBI" id="CHEBI:57743"/>
    </ligand>
</feature>
<feature type="binding site" evidence="1">
    <location>
        <position position="188"/>
    </location>
    <ligand>
        <name>L-citrulline</name>
        <dbReference type="ChEBI" id="CHEBI:57743"/>
    </ligand>
</feature>
<feature type="binding site" evidence="1">
    <location>
        <position position="264"/>
    </location>
    <ligand>
        <name>L-citrulline</name>
        <dbReference type="ChEBI" id="CHEBI:57743"/>
    </ligand>
</feature>
<feature type="binding site" evidence="1">
    <location>
        <position position="276"/>
    </location>
    <ligand>
        <name>L-citrulline</name>
        <dbReference type="ChEBI" id="CHEBI:57743"/>
    </ligand>
</feature>
<name>ASSY_PSEP1</name>
<comment type="catalytic activity">
    <reaction evidence="1">
        <text>L-citrulline + L-aspartate + ATP = 2-(N(omega)-L-arginino)succinate + AMP + diphosphate + H(+)</text>
        <dbReference type="Rhea" id="RHEA:10932"/>
        <dbReference type="ChEBI" id="CHEBI:15378"/>
        <dbReference type="ChEBI" id="CHEBI:29991"/>
        <dbReference type="ChEBI" id="CHEBI:30616"/>
        <dbReference type="ChEBI" id="CHEBI:33019"/>
        <dbReference type="ChEBI" id="CHEBI:57472"/>
        <dbReference type="ChEBI" id="CHEBI:57743"/>
        <dbReference type="ChEBI" id="CHEBI:456215"/>
        <dbReference type="EC" id="6.3.4.5"/>
    </reaction>
</comment>
<comment type="pathway">
    <text evidence="1">Amino-acid biosynthesis; L-arginine biosynthesis; L-arginine from L-ornithine and carbamoyl phosphate: step 2/3.</text>
</comment>
<comment type="subunit">
    <text evidence="1">Homotetramer.</text>
</comment>
<comment type="subcellular location">
    <subcellularLocation>
        <location evidence="1">Cytoplasm</location>
    </subcellularLocation>
</comment>
<comment type="similarity">
    <text evidence="1">Belongs to the argininosuccinate synthase family. Type 1 subfamily.</text>
</comment>
<reference key="1">
    <citation type="submission" date="2007-05" db="EMBL/GenBank/DDBJ databases">
        <title>Complete sequence of Pseudomonas putida F1.</title>
        <authorList>
            <consortium name="US DOE Joint Genome Institute"/>
            <person name="Copeland A."/>
            <person name="Lucas S."/>
            <person name="Lapidus A."/>
            <person name="Barry K."/>
            <person name="Detter J.C."/>
            <person name="Glavina del Rio T."/>
            <person name="Hammon N."/>
            <person name="Israni S."/>
            <person name="Dalin E."/>
            <person name="Tice H."/>
            <person name="Pitluck S."/>
            <person name="Chain P."/>
            <person name="Malfatti S."/>
            <person name="Shin M."/>
            <person name="Vergez L."/>
            <person name="Schmutz J."/>
            <person name="Larimer F."/>
            <person name="Land M."/>
            <person name="Hauser L."/>
            <person name="Kyrpides N."/>
            <person name="Lykidis A."/>
            <person name="Parales R."/>
            <person name="Richardson P."/>
        </authorList>
    </citation>
    <scope>NUCLEOTIDE SEQUENCE [LARGE SCALE GENOMIC DNA]</scope>
    <source>
        <strain>ATCC 700007 / DSM 6899 / JCM 31910 / BCRC 17059 / LMG 24140 / F1</strain>
    </source>
</reference>
<accession>A5VZI0</accession>
<sequence length="405" mass="45164">MADVKKVVLAYSGGLDTSVILKWLQDTYNCEVVTFTADLGQGEEVEPARAKAQAMGVKEIYIDDLREEFVRDFVFPMFRANTVYEGEYLLGTSIARPLIAKRLIEIANETGADAISHGATGKGNDQVRFELGAYALKPGVKVIAPWREWDLLSREKLMDYAEKHGIPIERHGKKKSPYSMDANLLHISYEGGVLEDTWTEHEEDMWRWSVSPENAPDQATYIELTYRNGDIVAIDGVEKSPATVLADLNRIGGANGIGRLDIVENRYVGMKSRGCYETPGGTIMLKAHRAIESITLDREVAHLKDELMPKYASLIYTGYWWSPERLMLQQMIDASQVNVNGVVRLKLYKGNVTVVGRKSDDSLFDANIATFEEDGGAYNQADAAGFIKLNALRMRIAANKGRSLL</sequence>
<keyword id="KW-0028">Amino-acid biosynthesis</keyword>
<keyword id="KW-0055">Arginine biosynthesis</keyword>
<keyword id="KW-0067">ATP-binding</keyword>
<keyword id="KW-0963">Cytoplasm</keyword>
<keyword id="KW-0436">Ligase</keyword>
<keyword id="KW-0547">Nucleotide-binding</keyword>